<protein>
    <recommendedName>
        <fullName>Sodium-coupled monocarboxylate transporter 1</fullName>
    </recommendedName>
    <alternativeName>
        <fullName>Electrogenic sodium monocarboxylate cotransporter</fullName>
    </alternativeName>
    <alternativeName>
        <fullName>Solute carrier family 5 member 8</fullName>
    </alternativeName>
</protein>
<feature type="chain" id="PRO_0000334500" description="Sodium-coupled monocarboxylate transporter 1">
    <location>
        <begin position="1"/>
        <end position="611"/>
    </location>
</feature>
<feature type="topological domain" description="Extracellular" evidence="2">
    <location>
        <begin position="1"/>
        <end position="9"/>
    </location>
</feature>
<feature type="transmembrane region" description="Helical" evidence="2">
    <location>
        <begin position="10"/>
        <end position="30"/>
    </location>
</feature>
<feature type="topological domain" description="Cytoplasmic" evidence="2">
    <location>
        <begin position="31"/>
        <end position="51"/>
    </location>
</feature>
<feature type="transmembrane region" description="Helical" evidence="2">
    <location>
        <begin position="52"/>
        <end position="72"/>
    </location>
</feature>
<feature type="topological domain" description="Extracellular" evidence="2">
    <location>
        <begin position="73"/>
        <end position="86"/>
    </location>
</feature>
<feature type="transmembrane region" description="Helical" evidence="2">
    <location>
        <begin position="87"/>
        <end position="107"/>
    </location>
</feature>
<feature type="topological domain" description="Cytoplasmic" evidence="2">
    <location>
        <begin position="108"/>
        <end position="132"/>
    </location>
</feature>
<feature type="transmembrane region" description="Helical" evidence="2">
    <location>
        <begin position="133"/>
        <end position="153"/>
    </location>
</feature>
<feature type="topological domain" description="Extracellular" evidence="2">
    <location>
        <begin position="154"/>
        <end position="161"/>
    </location>
</feature>
<feature type="transmembrane region" description="Helical" evidence="2">
    <location>
        <begin position="162"/>
        <end position="182"/>
    </location>
</feature>
<feature type="topological domain" description="Cytoplasmic" evidence="2">
    <location>
        <begin position="183"/>
        <end position="184"/>
    </location>
</feature>
<feature type="transmembrane region" description="Helical" evidence="2">
    <location>
        <begin position="185"/>
        <end position="205"/>
    </location>
</feature>
<feature type="topological domain" description="Extracellular" evidence="2">
    <location>
        <begin position="206"/>
        <end position="239"/>
    </location>
</feature>
<feature type="transmembrane region" description="Helical" evidence="2">
    <location>
        <begin position="240"/>
        <end position="260"/>
    </location>
</feature>
<feature type="topological domain" description="Cytoplasmic" evidence="2">
    <location>
        <begin position="261"/>
        <end position="279"/>
    </location>
</feature>
<feature type="transmembrane region" description="Helical" evidence="2">
    <location>
        <begin position="280"/>
        <end position="300"/>
    </location>
</feature>
<feature type="topological domain" description="Extracellular" evidence="2">
    <location>
        <begin position="301"/>
        <end position="336"/>
    </location>
</feature>
<feature type="transmembrane region" description="Helical" evidence="2">
    <location>
        <begin position="337"/>
        <end position="359"/>
    </location>
</feature>
<feature type="topological domain" description="Cytoplasmic" evidence="2">
    <location>
        <begin position="360"/>
        <end position="389"/>
    </location>
</feature>
<feature type="transmembrane region" description="Helical" evidence="2">
    <location>
        <begin position="390"/>
        <end position="410"/>
    </location>
</feature>
<feature type="topological domain" description="Extracellular" evidence="2">
    <location>
        <begin position="411"/>
        <end position="415"/>
    </location>
</feature>
<feature type="transmembrane region" description="Helical" evidence="2">
    <location>
        <begin position="416"/>
        <end position="436"/>
    </location>
</feature>
<feature type="topological domain" description="Cytoplasmic" evidence="2">
    <location>
        <begin position="437"/>
        <end position="439"/>
    </location>
</feature>
<feature type="transmembrane region" description="Helical" evidence="2">
    <location>
        <begin position="440"/>
        <end position="460"/>
    </location>
</feature>
<feature type="topological domain" description="Extracellular" evidence="2">
    <location>
        <begin position="461"/>
        <end position="518"/>
    </location>
</feature>
<feature type="transmembrane region" description="Helical" evidence="2">
    <location>
        <begin position="519"/>
        <end position="539"/>
    </location>
</feature>
<feature type="topological domain" description="Cytoplasmic" evidence="2">
    <location>
        <begin position="540"/>
        <end position="611"/>
    </location>
</feature>
<feature type="short sequence motif" description="PDZ-binding" evidence="1">
    <location>
        <begin position="609"/>
        <end position="611"/>
    </location>
</feature>
<feature type="glycosylation site" description="N-linked (GlcNAc...) asparagine" evidence="2">
    <location>
        <position position="485"/>
    </location>
</feature>
<feature type="sequence conflict" description="In Ref. 3; AAH17691." evidence="12" ref="3">
    <original>T</original>
    <variation>N</variation>
    <location>
        <position position="587"/>
    </location>
</feature>
<gene>
    <name evidence="16" type="primary">Slc5a8</name>
    <name evidence="11" type="synonym">Smct</name>
    <name evidence="1" type="synonym">Smct1</name>
</gene>
<organism>
    <name type="scientific">Mus musculus</name>
    <name type="common">Mouse</name>
    <dbReference type="NCBI Taxonomy" id="10090"/>
    <lineage>
        <taxon>Eukaryota</taxon>
        <taxon>Metazoa</taxon>
        <taxon>Chordata</taxon>
        <taxon>Craniata</taxon>
        <taxon>Vertebrata</taxon>
        <taxon>Euteleostomi</taxon>
        <taxon>Mammalia</taxon>
        <taxon>Eutheria</taxon>
        <taxon>Euarchontoglires</taxon>
        <taxon>Glires</taxon>
        <taxon>Rodentia</taxon>
        <taxon>Myomorpha</taxon>
        <taxon>Muroidea</taxon>
        <taxon>Muridae</taxon>
        <taxon>Murinae</taxon>
        <taxon>Mus</taxon>
        <taxon>Mus</taxon>
    </lineage>
</organism>
<reference evidence="12 14" key="1">
    <citation type="journal article" date="2004" name="J. Biol. Chem.">
        <title>Expression of slc5a8 in kidney and its role in Na(+)-coupled transport of lactate.</title>
        <authorList>
            <person name="Gopal E."/>
            <person name="Fei Y.-J."/>
            <person name="Sugawara M."/>
            <person name="Miyauchi S."/>
            <person name="Zhuang L."/>
            <person name="Martin P."/>
            <person name="Smith S.B."/>
            <person name="Prasad P.D."/>
            <person name="Ganapathy V."/>
        </authorList>
    </citation>
    <scope>NUCLEOTIDE SEQUENCE [MRNA]</scope>
    <scope>FUNCTION</scope>
    <scope>STOICHIOMETRY</scope>
    <scope>ACTIVITY REGULATION</scope>
    <scope>TISSUE SPECIFICITY</scope>
    <scope>TRANSPORTER ACTIVITY</scope>
    <source>
        <strain evidence="14">C57BL/6J</strain>
        <tissue evidence="14">Kidney</tissue>
    </source>
</reference>
<reference evidence="15" key="2">
    <citation type="journal article" date="2005" name="Science">
        <title>The transcriptional landscape of the mammalian genome.</title>
        <authorList>
            <person name="Carninci P."/>
            <person name="Kasukawa T."/>
            <person name="Katayama S."/>
            <person name="Gough J."/>
            <person name="Frith M.C."/>
            <person name="Maeda N."/>
            <person name="Oyama R."/>
            <person name="Ravasi T."/>
            <person name="Lenhard B."/>
            <person name="Wells C."/>
            <person name="Kodzius R."/>
            <person name="Shimokawa K."/>
            <person name="Bajic V.B."/>
            <person name="Brenner S.E."/>
            <person name="Batalov S."/>
            <person name="Forrest A.R."/>
            <person name="Zavolan M."/>
            <person name="Davis M.J."/>
            <person name="Wilming L.G."/>
            <person name="Aidinis V."/>
            <person name="Allen J.E."/>
            <person name="Ambesi-Impiombato A."/>
            <person name="Apweiler R."/>
            <person name="Aturaliya R.N."/>
            <person name="Bailey T.L."/>
            <person name="Bansal M."/>
            <person name="Baxter L."/>
            <person name="Beisel K.W."/>
            <person name="Bersano T."/>
            <person name="Bono H."/>
            <person name="Chalk A.M."/>
            <person name="Chiu K.P."/>
            <person name="Choudhary V."/>
            <person name="Christoffels A."/>
            <person name="Clutterbuck D.R."/>
            <person name="Crowe M.L."/>
            <person name="Dalla E."/>
            <person name="Dalrymple B.P."/>
            <person name="de Bono B."/>
            <person name="Della Gatta G."/>
            <person name="di Bernardo D."/>
            <person name="Down T."/>
            <person name="Engstrom P."/>
            <person name="Fagiolini M."/>
            <person name="Faulkner G."/>
            <person name="Fletcher C.F."/>
            <person name="Fukushima T."/>
            <person name="Furuno M."/>
            <person name="Futaki S."/>
            <person name="Gariboldi M."/>
            <person name="Georgii-Hemming P."/>
            <person name="Gingeras T.R."/>
            <person name="Gojobori T."/>
            <person name="Green R.E."/>
            <person name="Gustincich S."/>
            <person name="Harbers M."/>
            <person name="Hayashi Y."/>
            <person name="Hensch T.K."/>
            <person name="Hirokawa N."/>
            <person name="Hill D."/>
            <person name="Huminiecki L."/>
            <person name="Iacono M."/>
            <person name="Ikeo K."/>
            <person name="Iwama A."/>
            <person name="Ishikawa T."/>
            <person name="Jakt M."/>
            <person name="Kanapin A."/>
            <person name="Katoh M."/>
            <person name="Kawasawa Y."/>
            <person name="Kelso J."/>
            <person name="Kitamura H."/>
            <person name="Kitano H."/>
            <person name="Kollias G."/>
            <person name="Krishnan S.P."/>
            <person name="Kruger A."/>
            <person name="Kummerfeld S.K."/>
            <person name="Kurochkin I.V."/>
            <person name="Lareau L.F."/>
            <person name="Lazarevic D."/>
            <person name="Lipovich L."/>
            <person name="Liu J."/>
            <person name="Liuni S."/>
            <person name="McWilliam S."/>
            <person name="Madan Babu M."/>
            <person name="Madera M."/>
            <person name="Marchionni L."/>
            <person name="Matsuda H."/>
            <person name="Matsuzawa S."/>
            <person name="Miki H."/>
            <person name="Mignone F."/>
            <person name="Miyake S."/>
            <person name="Morris K."/>
            <person name="Mottagui-Tabar S."/>
            <person name="Mulder N."/>
            <person name="Nakano N."/>
            <person name="Nakauchi H."/>
            <person name="Ng P."/>
            <person name="Nilsson R."/>
            <person name="Nishiguchi S."/>
            <person name="Nishikawa S."/>
            <person name="Nori F."/>
            <person name="Ohara O."/>
            <person name="Okazaki Y."/>
            <person name="Orlando V."/>
            <person name="Pang K.C."/>
            <person name="Pavan W.J."/>
            <person name="Pavesi G."/>
            <person name="Pesole G."/>
            <person name="Petrovsky N."/>
            <person name="Piazza S."/>
            <person name="Reed J."/>
            <person name="Reid J.F."/>
            <person name="Ring B.Z."/>
            <person name="Ringwald M."/>
            <person name="Rost B."/>
            <person name="Ruan Y."/>
            <person name="Salzberg S.L."/>
            <person name="Sandelin A."/>
            <person name="Schneider C."/>
            <person name="Schoenbach C."/>
            <person name="Sekiguchi K."/>
            <person name="Semple C.A."/>
            <person name="Seno S."/>
            <person name="Sessa L."/>
            <person name="Sheng Y."/>
            <person name="Shibata Y."/>
            <person name="Shimada H."/>
            <person name="Shimada K."/>
            <person name="Silva D."/>
            <person name="Sinclair B."/>
            <person name="Sperling S."/>
            <person name="Stupka E."/>
            <person name="Sugiura K."/>
            <person name="Sultana R."/>
            <person name="Takenaka Y."/>
            <person name="Taki K."/>
            <person name="Tammoja K."/>
            <person name="Tan S.L."/>
            <person name="Tang S."/>
            <person name="Taylor M.S."/>
            <person name="Tegner J."/>
            <person name="Teichmann S.A."/>
            <person name="Ueda H.R."/>
            <person name="van Nimwegen E."/>
            <person name="Verardo R."/>
            <person name="Wei C.L."/>
            <person name="Yagi K."/>
            <person name="Yamanishi H."/>
            <person name="Zabarovsky E."/>
            <person name="Zhu S."/>
            <person name="Zimmer A."/>
            <person name="Hide W."/>
            <person name="Bult C."/>
            <person name="Grimmond S.M."/>
            <person name="Teasdale R.D."/>
            <person name="Liu E.T."/>
            <person name="Brusic V."/>
            <person name="Quackenbush J."/>
            <person name="Wahlestedt C."/>
            <person name="Mattick J.S."/>
            <person name="Hume D.A."/>
            <person name="Kai C."/>
            <person name="Sasaki D."/>
            <person name="Tomaru Y."/>
            <person name="Fukuda S."/>
            <person name="Kanamori-Katayama M."/>
            <person name="Suzuki M."/>
            <person name="Aoki J."/>
            <person name="Arakawa T."/>
            <person name="Iida J."/>
            <person name="Imamura K."/>
            <person name="Itoh M."/>
            <person name="Kato T."/>
            <person name="Kawaji H."/>
            <person name="Kawagashira N."/>
            <person name="Kawashima T."/>
            <person name="Kojima M."/>
            <person name="Kondo S."/>
            <person name="Konno H."/>
            <person name="Nakano K."/>
            <person name="Ninomiya N."/>
            <person name="Nishio T."/>
            <person name="Okada M."/>
            <person name="Plessy C."/>
            <person name="Shibata K."/>
            <person name="Shiraki T."/>
            <person name="Suzuki S."/>
            <person name="Tagami M."/>
            <person name="Waki K."/>
            <person name="Watahiki A."/>
            <person name="Okamura-Oho Y."/>
            <person name="Suzuki H."/>
            <person name="Kawai J."/>
            <person name="Hayashizaki Y."/>
        </authorList>
    </citation>
    <scope>NUCLEOTIDE SEQUENCE [LARGE SCALE MRNA]</scope>
    <source>
        <strain evidence="15">C57BL/6J</strain>
        <tissue evidence="15">Thymus</tissue>
    </source>
</reference>
<reference evidence="13" key="3">
    <citation type="journal article" date="2004" name="Genome Res.">
        <title>The status, quality, and expansion of the NIH full-length cDNA project: the Mammalian Gene Collection (MGC).</title>
        <authorList>
            <consortium name="The MGC Project Team"/>
        </authorList>
    </citation>
    <scope>NUCLEOTIDE SEQUENCE [LARGE SCALE MRNA]</scope>
    <source>
        <strain evidence="13">FVB/N</strain>
        <tissue evidence="13">Kidney</tissue>
    </source>
</reference>
<reference evidence="12" key="4">
    <citation type="journal article" date="2005" name="Biochem. J.">
        <title>Sodium-coupled and electrogenic transport of B-complex vitamin nicotinic acid by slc5a8, a member of the Na/glucose co-transporter gene family.</title>
        <authorList>
            <person name="Gopal E."/>
            <person name="Fei Y.J."/>
            <person name="Miyauchi S."/>
            <person name="Zhuang L."/>
            <person name="Prasad P.D."/>
            <person name="Ganapathy V."/>
        </authorList>
    </citation>
    <scope>FUNCTION</scope>
    <scope>BIOPHYSICOCHEMICAL PROPERTIES</scope>
    <scope>TRANSPORTER ACTIVITY</scope>
</reference>
<reference evidence="12" key="5">
    <citation type="journal article" date="2005" name="Cancer Res.">
        <title>Shared epigenetic mechanisms in human and mouse gliomas inactivate expression of the growth suppressor SLC5A8.</title>
        <authorList>
            <person name="Hong C."/>
            <person name="Maunakea A."/>
            <person name="Jun P."/>
            <person name="Bollen A.W."/>
            <person name="Hodgson J.G."/>
            <person name="Goldenberg D.D."/>
            <person name="Weiss W.A."/>
            <person name="Costello J.F."/>
        </authorList>
    </citation>
    <scope>TISSUE SPECIFICITY</scope>
</reference>
<reference evidence="12" key="6">
    <citation type="journal article" date="2006" name="Biomed. Res.">
        <title>Cellular expression of monocarboxylate transporters (MCT) in the digestive tract of the mouse, rat, and humans, with special reference to slc5a8.</title>
        <authorList>
            <person name="Iwanaga T."/>
            <person name="Takebe K."/>
            <person name="Kato I."/>
            <person name="Karaki S."/>
            <person name="Kuwahara A."/>
        </authorList>
    </citation>
    <scope>SUBCELLULAR LOCATION</scope>
    <scope>TISSUE SPECIFICITY</scope>
</reference>
<reference evidence="12" key="7">
    <citation type="journal article" date="2006" name="J. Neurochem.">
        <title>Identity of SMCT1 (SLC5A8) as a neuron-specific Na+-coupled transporter for active uptake of L-lactate and ketone bodies in the brain.</title>
        <authorList>
            <person name="Martin P.M."/>
            <person name="Gopal E."/>
            <person name="Ananth S."/>
            <person name="Zhuang L."/>
            <person name="Itagaki S."/>
            <person name="Prasad B.M."/>
            <person name="Smith S.B."/>
            <person name="Prasad P.D."/>
            <person name="Ganapathy V."/>
        </authorList>
    </citation>
    <scope>TISSUE SPECIFICITY</scope>
</reference>
<reference evidence="12" key="8">
    <citation type="journal article" date="2007" name="Pharm. Res.">
        <title>Transport of nicotinate and structurally related compounds by human SMCT1 (SLC5A8) and its relevance to drug transport in the mammalian intestinal tract.</title>
        <authorList>
            <person name="Gopal E."/>
            <person name="Miyauchi S."/>
            <person name="Martin P.M."/>
            <person name="Ananth S."/>
            <person name="Roon P."/>
            <person name="Smith S.B."/>
            <person name="Ganapathy V."/>
        </authorList>
    </citation>
    <scope>SUBCELLULAR LOCATION</scope>
    <scope>TISSUE SPECIFICITY</scope>
</reference>
<reference key="9">
    <citation type="journal article" date="2010" name="Biochim. Biophys. Acta">
        <title>Sodium-coupled electrogenic transport of pyroglutamate (5-oxoproline) via SLC5A8, a monocarboxylate transporter.</title>
        <authorList>
            <person name="Miyauchi S."/>
            <person name="Gopal E."/>
            <person name="Babu E."/>
            <person name="Srinivas S.R."/>
            <person name="Kubo Y."/>
            <person name="Umapathy N.S."/>
            <person name="Thakkar S.V."/>
            <person name="Ganapathy V."/>
            <person name="Prasad P.D."/>
        </authorList>
    </citation>
    <scope>FUNCTION</scope>
    <scope>TRANSPORTER ACTIVITY</scope>
</reference>
<reference key="10">
    <citation type="journal article" date="2010" name="Cell">
        <title>A tissue-specific atlas of mouse protein phosphorylation and expression.</title>
        <authorList>
            <person name="Huttlin E.L."/>
            <person name="Jedrychowski M.P."/>
            <person name="Elias J.E."/>
            <person name="Goswami T."/>
            <person name="Rad R."/>
            <person name="Beausoleil S.A."/>
            <person name="Villen J."/>
            <person name="Haas W."/>
            <person name="Sowa M.E."/>
            <person name="Gygi S.P."/>
        </authorList>
    </citation>
    <scope>IDENTIFICATION BY MASS SPECTROMETRY [LARGE SCALE ANALYSIS]</scope>
    <source>
        <tissue>Kidney</tissue>
    </source>
</reference>
<reference key="11">
    <citation type="journal article" date="2019" name="J. Physiol. Sci.">
        <title>Identification of the multivalent PDZ protein PDZK1 as a binding partner of sodium-coupled monocarboxylate transporter SMCT1 (SLC5A8) and SMCT2 (SLC5A12).</title>
        <authorList>
            <person name="Srivastava S."/>
            <person name="Nakagawa K."/>
            <person name="He X."/>
            <person name="Kimura T."/>
            <person name="Fukutomi T."/>
            <person name="Miyauchi S."/>
            <person name="Sakurai H."/>
            <person name="Anzai N."/>
        </authorList>
    </citation>
    <scope>SUBCELLULAR LOCATION</scope>
</reference>
<accession>Q8BYF6</accession>
<accession>Q8VD01</accession>
<dbReference type="EMBL" id="AY484428">
    <property type="protein sequence ID" value="AAS49159.1"/>
    <property type="molecule type" value="mRNA"/>
</dbReference>
<dbReference type="EMBL" id="AK039927">
    <property type="protein sequence ID" value="BAC30480.1"/>
    <property type="molecule type" value="mRNA"/>
</dbReference>
<dbReference type="EMBL" id="BC017691">
    <property type="protein sequence ID" value="AAH17691.1"/>
    <property type="status" value="ALT_INIT"/>
    <property type="molecule type" value="mRNA"/>
</dbReference>
<dbReference type="CCDS" id="CCDS36026.1"/>
<dbReference type="RefSeq" id="NP_663398.2">
    <property type="nucleotide sequence ID" value="NM_145423.2"/>
</dbReference>
<dbReference type="SMR" id="Q8BYF6"/>
<dbReference type="FunCoup" id="Q8BYF6">
    <property type="interactions" value="12"/>
</dbReference>
<dbReference type="STRING" id="10090.ENSMUSP00000020255"/>
<dbReference type="GlyCosmos" id="Q8BYF6">
    <property type="glycosylation" value="1 site, No reported glycans"/>
</dbReference>
<dbReference type="GlyGen" id="Q8BYF6">
    <property type="glycosylation" value="1 site"/>
</dbReference>
<dbReference type="iPTMnet" id="Q8BYF6"/>
<dbReference type="PhosphoSitePlus" id="Q8BYF6"/>
<dbReference type="jPOST" id="Q8BYF6"/>
<dbReference type="PaxDb" id="10090-ENSMUSP00000020255"/>
<dbReference type="ProteomicsDB" id="255469"/>
<dbReference type="Antibodypedia" id="51376">
    <property type="antibodies" value="178 antibodies from 23 providers"/>
</dbReference>
<dbReference type="DNASU" id="216225"/>
<dbReference type="Ensembl" id="ENSMUST00000020255.8">
    <property type="protein sequence ID" value="ENSMUSP00000020255.7"/>
    <property type="gene ID" value="ENSMUSG00000020062.8"/>
</dbReference>
<dbReference type="GeneID" id="216225"/>
<dbReference type="KEGG" id="mmu:216225"/>
<dbReference type="UCSC" id="uc007grz.1">
    <property type="organism name" value="mouse"/>
</dbReference>
<dbReference type="AGR" id="MGI:2384916"/>
<dbReference type="CTD" id="160728"/>
<dbReference type="MGI" id="MGI:2384916">
    <property type="gene designation" value="Slc5a8"/>
</dbReference>
<dbReference type="VEuPathDB" id="HostDB:ENSMUSG00000020062"/>
<dbReference type="eggNOG" id="KOG2349">
    <property type="taxonomic scope" value="Eukaryota"/>
</dbReference>
<dbReference type="GeneTree" id="ENSGT00940000155166"/>
<dbReference type="HOGENOM" id="CLU_018808_11_1_1"/>
<dbReference type="InParanoid" id="Q8BYF6"/>
<dbReference type="OMA" id="VFVFYQF"/>
<dbReference type="OrthoDB" id="6132759at2759"/>
<dbReference type="PhylomeDB" id="Q8BYF6"/>
<dbReference type="TreeFam" id="TF316728"/>
<dbReference type="Reactome" id="R-MMU-197264">
    <property type="pathway name" value="Nicotinamide salvaging"/>
</dbReference>
<dbReference type="Reactome" id="R-MMU-428643">
    <property type="pathway name" value="Organic anion transporters"/>
</dbReference>
<dbReference type="BioGRID-ORCS" id="216225">
    <property type="hits" value="5 hits in 78 CRISPR screens"/>
</dbReference>
<dbReference type="ChiTaRS" id="Slc5a8">
    <property type="organism name" value="mouse"/>
</dbReference>
<dbReference type="PRO" id="PR:Q8BYF6"/>
<dbReference type="Proteomes" id="UP000000589">
    <property type="component" value="Chromosome 10"/>
</dbReference>
<dbReference type="RNAct" id="Q8BYF6">
    <property type="molecule type" value="protein"/>
</dbReference>
<dbReference type="Bgee" id="ENSMUSG00000020062">
    <property type="expression patterns" value="Expressed in left colon and 60 other cell types or tissues"/>
</dbReference>
<dbReference type="GO" id="GO:0016324">
    <property type="term" value="C:apical plasma membrane"/>
    <property type="evidence" value="ECO:0000314"/>
    <property type="project" value="UniProtKB"/>
</dbReference>
<dbReference type="GO" id="GO:0031526">
    <property type="term" value="C:brush border membrane"/>
    <property type="evidence" value="ECO:0000266"/>
    <property type="project" value="MGI"/>
</dbReference>
<dbReference type="GO" id="GO:0000811">
    <property type="term" value="C:GINS complex"/>
    <property type="evidence" value="ECO:0000314"/>
    <property type="project" value="UniProtKB"/>
</dbReference>
<dbReference type="GO" id="GO:0015129">
    <property type="term" value="F:lactate transmembrane transporter activity"/>
    <property type="evidence" value="ECO:0000314"/>
    <property type="project" value="MGI"/>
</dbReference>
<dbReference type="GO" id="GO:0140161">
    <property type="term" value="F:monocarboxylate:sodium symporter activity"/>
    <property type="evidence" value="ECO:0000314"/>
    <property type="project" value="UniProtKB"/>
</dbReference>
<dbReference type="GO" id="GO:0005343">
    <property type="term" value="F:organic acid:sodium symporter activity"/>
    <property type="evidence" value="ECO:0000314"/>
    <property type="project" value="MGI"/>
</dbReference>
<dbReference type="GO" id="GO:0015552">
    <property type="term" value="F:propionate transmembrane transporter activity"/>
    <property type="evidence" value="ECO:0000314"/>
    <property type="project" value="MGI"/>
</dbReference>
<dbReference type="GO" id="GO:0015636">
    <property type="term" value="F:short-chain fatty acid transmembrane transporter activity"/>
    <property type="evidence" value="ECO:0000314"/>
    <property type="project" value="MGI"/>
</dbReference>
<dbReference type="GO" id="GO:0006846">
    <property type="term" value="P:acetate transport"/>
    <property type="evidence" value="ECO:0000250"/>
    <property type="project" value="UniProtKB"/>
</dbReference>
<dbReference type="GO" id="GO:0006915">
    <property type="term" value="P:apoptotic process"/>
    <property type="evidence" value="ECO:0007669"/>
    <property type="project" value="UniProtKB-KW"/>
</dbReference>
<dbReference type="GO" id="GO:0006821">
    <property type="term" value="P:chloride transport"/>
    <property type="evidence" value="ECO:0000250"/>
    <property type="project" value="UniProtKB"/>
</dbReference>
<dbReference type="GO" id="GO:0015705">
    <property type="term" value="P:iodide transport"/>
    <property type="evidence" value="ECO:0000250"/>
    <property type="project" value="UniProtKB"/>
</dbReference>
<dbReference type="GO" id="GO:0015718">
    <property type="term" value="P:monocarboxylic acid transport"/>
    <property type="evidence" value="ECO:0000314"/>
    <property type="project" value="MGI"/>
</dbReference>
<dbReference type="GO" id="GO:2001142">
    <property type="term" value="P:nicotinate transport"/>
    <property type="evidence" value="ECO:0000314"/>
    <property type="project" value="UniProtKB"/>
</dbReference>
<dbReference type="GO" id="GO:0015706">
    <property type="term" value="P:nitrate transmembrane transport"/>
    <property type="evidence" value="ECO:0000250"/>
    <property type="project" value="UniProtKB"/>
</dbReference>
<dbReference type="GO" id="GO:0015730">
    <property type="term" value="P:propanoate transmembrane transport"/>
    <property type="evidence" value="ECO:0000314"/>
    <property type="project" value="MGI"/>
</dbReference>
<dbReference type="GO" id="GO:0006848">
    <property type="term" value="P:pyruvate transport"/>
    <property type="evidence" value="ECO:0000250"/>
    <property type="project" value="UniProtKB"/>
</dbReference>
<dbReference type="GO" id="GO:0015913">
    <property type="term" value="P:short-chain fatty acid transmembrane transport"/>
    <property type="evidence" value="ECO:0000314"/>
    <property type="project" value="MGI"/>
</dbReference>
<dbReference type="CDD" id="cd11519">
    <property type="entry name" value="SLC5sbd_SMCT1"/>
    <property type="match status" value="1"/>
</dbReference>
<dbReference type="FunFam" id="1.20.1730.10:FF:000007">
    <property type="entry name" value="Sodium-coupled monocarboxylate transporter 2"/>
    <property type="match status" value="1"/>
</dbReference>
<dbReference type="Gene3D" id="1.20.1730.10">
    <property type="entry name" value="Sodium/glucose cotransporter"/>
    <property type="match status" value="1"/>
</dbReference>
<dbReference type="InterPro" id="IPR038377">
    <property type="entry name" value="Na/Glc_symporter_sf"/>
</dbReference>
<dbReference type="InterPro" id="IPR001734">
    <property type="entry name" value="Na/solute_symporter"/>
</dbReference>
<dbReference type="InterPro" id="IPR041992">
    <property type="entry name" value="SLC5sbd_SMCT1"/>
</dbReference>
<dbReference type="InterPro" id="IPR051163">
    <property type="entry name" value="Sodium:Solute_Symporter_SSF"/>
</dbReference>
<dbReference type="NCBIfam" id="TIGR00813">
    <property type="entry name" value="sss"/>
    <property type="match status" value="1"/>
</dbReference>
<dbReference type="PANTHER" id="PTHR42985">
    <property type="entry name" value="SODIUM-COUPLED MONOCARBOXYLATE TRANSPORTER"/>
    <property type="match status" value="1"/>
</dbReference>
<dbReference type="PANTHER" id="PTHR42985:SF10">
    <property type="entry name" value="SODIUM-COUPLED MONOCARBOXYLATE TRANSPORTER 1"/>
    <property type="match status" value="1"/>
</dbReference>
<dbReference type="Pfam" id="PF00474">
    <property type="entry name" value="SSF"/>
    <property type="match status" value="1"/>
</dbReference>
<dbReference type="PROSITE" id="PS50283">
    <property type="entry name" value="NA_SOLUT_SYMP_3"/>
    <property type="match status" value="1"/>
</dbReference>
<sequence length="611" mass="66766">MDASRDIGSFVVWDYVVFAGMLLISAAIGIYYAFAGGGQQTSKDFLMGGRSMSAVPVALSLTASFMSAVTVLGTPAEVYRFGAIFSIFVITYFFVVVISAEVFLPVFYRLGITSTYEYLELRFNRCIRLCGTILFIVQTILYTGIVIYAPALALNQVTGFDLWGAVVATGVVCTFYCTLGGLKAVVWTDVFQVGIMVAGFASVIIQASITQHGINKILSDAFNGGRLNFWNFDPNPLQRHTFWTIVIGGTFTWTTIYGVNQSQVQRYISCKSRLHAKLSLYVNLVGLWVILTCSIFCGLALYSRYRECDPWTSKKVSAIDQLMPYLVLDILKNYPGVPGLFVACAYSGTLSTVSSSINALAAVTVEDLIKPRFKSLSEKSLSWISQGMSVLYGALCIGMAALASLMGALLQAALSIFGMVGGPLLGLFSLGILVPFANSIGALTGLLAGFAISLWVGIGAQLYPPLPERTLPLPLETYGCNITHNGSDWMSTTEMPFSTSAFQIHNAERTPLMDNWYSLSYLYFSTIGTLTTLFVGILISLSTGGRKQNLDPRFLLTKQDFLSNFDVFKKRNHVLNYKLHPVEVGGTDNPAFNHVELNFTDHSGKINGTRL</sequence>
<comment type="function">
    <text evidence="1 3 4 9">Acts as an electrogenic sodium (Na(+)) and chloride (Cl-)-dependent sodium-coupled solute transporter, including transport of monocarboxylates (short-chain fatty acids including L-lactate, D-lactate, pyruvate, acetate, propionate, valerate and butyrate), mocarboxylate drugs (nicotinate, benzoate, salicylate and 5-aminosalicylate) and ketone bodies (beta-D-hydroxybutyrate, acetoacetate and alpha-ketoisocaproate), with a Na(+):substrate stoichiometry of between 4:1 and 2:1 (PubMed:15322102, PubMed:15651982, PubMed:20211600). Catalyzes passive carrier mediated diffusion of iodide (By similarity). Mediates iodide transport from the thyrocyte into the colloid lumen through the apical membrane (By similarity). May be responsible for the absorption of D-lactate and monocarboxylate drugs from the intestinal tract (By similarity). May play a critical role in the entry of L-lactate and ketone bodies into neurons by a process driven by an electrochemical Na(+) gradient and hence contribute to the maintenance of the energy status and function of neurons (By similarity). Mediates sodium-coupled electrogenic transport of pyroglutamate (5-oxo-L-proline) (PubMed:20211600). Can mediate the transport of chloride, bromide, iodide and nitrate ions when external concentration of sodium ions is reduced (By similarity).</text>
</comment>
<comment type="catalytic activity">
    <reaction evidence="3">
        <text>(S)-lactate(out) + 2 Na(+)(out) = (S)-lactate(in) + 2 Na(+)(in)</text>
        <dbReference type="Rhea" id="RHEA:72935"/>
        <dbReference type="ChEBI" id="CHEBI:16651"/>
        <dbReference type="ChEBI" id="CHEBI:29101"/>
    </reaction>
</comment>
<comment type="catalytic activity">
    <reaction evidence="3">
        <text>propanoate(out) + 2 Na(+)(out) = propanoate(in) + 2 Na(+)(in)</text>
        <dbReference type="Rhea" id="RHEA:72939"/>
        <dbReference type="ChEBI" id="CHEBI:17272"/>
        <dbReference type="ChEBI" id="CHEBI:29101"/>
    </reaction>
</comment>
<comment type="catalytic activity">
    <reaction evidence="3">
        <text>pyruvate(out) + 2 Na(+)(out) = pyruvate(in) + 2 Na(+)(in)</text>
        <dbReference type="Rhea" id="RHEA:72943"/>
        <dbReference type="ChEBI" id="CHEBI:15361"/>
        <dbReference type="ChEBI" id="CHEBI:29101"/>
    </reaction>
</comment>
<comment type="catalytic activity">
    <reaction evidence="3">
        <text>acetate(out) + 2 Na(+)(out) = acetate(in) + 2 Na(+)(in)</text>
        <dbReference type="Rhea" id="RHEA:72947"/>
        <dbReference type="ChEBI" id="CHEBI:29101"/>
        <dbReference type="ChEBI" id="CHEBI:30089"/>
    </reaction>
</comment>
<comment type="catalytic activity">
    <reaction evidence="3">
        <text>butanoate(out) + 2 Na(+)(out) = butanoate(in) + 2 Na(+)(in)</text>
        <dbReference type="Rhea" id="RHEA:72951"/>
        <dbReference type="ChEBI" id="CHEBI:17968"/>
        <dbReference type="ChEBI" id="CHEBI:29101"/>
    </reaction>
</comment>
<comment type="catalytic activity">
    <reaction evidence="4 9">
        <text>nicotinate(out) + 2 Na(+)(out) = nicotinate(in) + 2 Na(+)(in)</text>
        <dbReference type="Rhea" id="RHEA:72955"/>
        <dbReference type="ChEBI" id="CHEBI:29101"/>
        <dbReference type="ChEBI" id="CHEBI:32544"/>
    </reaction>
</comment>
<comment type="catalytic activity">
    <reaction evidence="1">
        <text>(R)-3-hydroxybutanoate(out) + 2 Na(+)(out) = (R)-3-hydroxybutanoate(in) + 2 Na(+)(in)</text>
        <dbReference type="Rhea" id="RHEA:72959"/>
        <dbReference type="ChEBI" id="CHEBI:10983"/>
        <dbReference type="ChEBI" id="CHEBI:29101"/>
    </reaction>
</comment>
<comment type="catalytic activity">
    <reaction evidence="1">
        <text>acetoacetate(out) + 2 Na(+)(out) = acetoacetate(in) + 2 Na(+)(in)</text>
        <dbReference type="Rhea" id="RHEA:72963"/>
        <dbReference type="ChEBI" id="CHEBI:13705"/>
        <dbReference type="ChEBI" id="CHEBI:29101"/>
    </reaction>
</comment>
<comment type="catalytic activity">
    <reaction evidence="1">
        <text>4-methyl-2-oxopentanoate(out) + 2 Na(+)(out) = 4-methyl-2-oxopentanoate(in) + 2 Na(+)(in)</text>
        <dbReference type="Rhea" id="RHEA:72967"/>
        <dbReference type="ChEBI" id="CHEBI:17865"/>
        <dbReference type="ChEBI" id="CHEBI:29101"/>
    </reaction>
</comment>
<comment type="catalytic activity">
    <reaction evidence="9">
        <text>5-oxo-L-proline(out) + 2 Na(+)(out) = 5-oxo-L-proline(in) + 2 Na(+)(in)</text>
        <dbReference type="Rhea" id="RHEA:72971"/>
        <dbReference type="ChEBI" id="CHEBI:29101"/>
        <dbReference type="ChEBI" id="CHEBI:58402"/>
    </reaction>
</comment>
<comment type="catalytic activity">
    <reaction evidence="1">
        <text>iodide(out) = iodide(in)</text>
        <dbReference type="Rhea" id="RHEA:66324"/>
        <dbReference type="ChEBI" id="CHEBI:16382"/>
    </reaction>
</comment>
<comment type="catalytic activity">
    <reaction evidence="1">
        <text>chloride(in) = chloride(out)</text>
        <dbReference type="Rhea" id="RHEA:29823"/>
        <dbReference type="ChEBI" id="CHEBI:17996"/>
    </reaction>
</comment>
<comment type="catalytic activity">
    <reaction evidence="1">
        <text>nitrate(in) = nitrate(out)</text>
        <dbReference type="Rhea" id="RHEA:34923"/>
        <dbReference type="ChEBI" id="CHEBI:17632"/>
    </reaction>
</comment>
<comment type="catalytic activity">
    <reaction evidence="1">
        <text>bromide(in) = bromide(out)</text>
        <dbReference type="Rhea" id="RHEA:75383"/>
        <dbReference type="ChEBI" id="CHEBI:15858"/>
    </reaction>
</comment>
<comment type="activity regulation">
    <text evidence="3">Transport of D-lactate and pyruvate stimulated by alpha-cyano-4-hydroxycinnamic acid, but inhibited by the short-chain fatty acids acetate, propionate and butyrate.</text>
</comment>
<comment type="biophysicochemical properties">
    <kinetics>
        <KM evidence="4">296 uM for nicotinate</KM>
    </kinetics>
</comment>
<comment type="subunit">
    <text evidence="1">Interacts (via PDZ-binding motif) with PDZK1 (via PDZ domains 1 and 3); interaction increases nicotinate transport activity of SLC5A8.</text>
</comment>
<comment type="subcellular location">
    <subcellularLocation>
        <location evidence="7 8 10">Apical cell membrane</location>
        <topology evidence="2">Multi-pass membrane protein</topology>
    </subcellularLocation>
    <text evidence="7 8">Restricted to the apical cell membrane of enterocytes.</text>
</comment>
<comment type="tissue specificity">
    <text evidence="3 5 6 7 8">Expressed in brain, colon, kidney and in the ileum and jejunum of small intestine. In the kidney, expression occurred in the proximal tubule and the loop of Henle, being restricted to tubular epithelial cells in both the cortex and the medulla. In the colon, predominantly expressed in the distal half of the large bowel and in the most terminal ileum. Localized selectively in the luminal surface of crypts in the large intestine and to the brush border in the middle parts of crypts in the cecum. In the brain, expression was seen throughout, exclusively in neurons, including the cortex, hippocampus, cerebellum and pituitary gland (at protein level). Expression is reduced in oligodendrogliomas.</text>
</comment>
<comment type="similarity">
    <text evidence="2">Belongs to the sodium:solute symporter (SSF) (TC 2.A.21) family.</text>
</comment>
<comment type="sequence caution" evidence="12">
    <conflict type="erroneous initiation">
        <sequence resource="EMBL-CDS" id="AAH17691"/>
    </conflict>
    <text>Truncated N-terminus.</text>
</comment>
<evidence type="ECO:0000250" key="1">
    <source>
        <dbReference type="UniProtKB" id="Q8N695"/>
    </source>
</evidence>
<evidence type="ECO:0000255" key="2"/>
<evidence type="ECO:0000269" key="3">
    <source>
    </source>
</evidence>
<evidence type="ECO:0000269" key="4">
    <source>
    </source>
</evidence>
<evidence type="ECO:0000269" key="5">
    <source>
    </source>
</evidence>
<evidence type="ECO:0000269" key="6">
    <source>
    </source>
</evidence>
<evidence type="ECO:0000269" key="7">
    <source>
    </source>
</evidence>
<evidence type="ECO:0000269" key="8">
    <source>
    </source>
</evidence>
<evidence type="ECO:0000269" key="9">
    <source>
    </source>
</evidence>
<evidence type="ECO:0000269" key="10">
    <source>
    </source>
</evidence>
<evidence type="ECO:0000303" key="11">
    <source>
    </source>
</evidence>
<evidence type="ECO:0000305" key="12"/>
<evidence type="ECO:0000312" key="13">
    <source>
        <dbReference type="EMBL" id="AAH17691.1"/>
    </source>
</evidence>
<evidence type="ECO:0000312" key="14">
    <source>
        <dbReference type="EMBL" id="AAS49159.1"/>
    </source>
</evidence>
<evidence type="ECO:0000312" key="15">
    <source>
        <dbReference type="EMBL" id="BAC30480.1"/>
    </source>
</evidence>
<evidence type="ECO:0000312" key="16">
    <source>
        <dbReference type="MGI" id="MGI:2384916"/>
    </source>
</evidence>
<keyword id="KW-0053">Apoptosis</keyword>
<keyword id="KW-1003">Cell membrane</keyword>
<keyword id="KW-0325">Glycoprotein</keyword>
<keyword id="KW-0406">Ion transport</keyword>
<keyword id="KW-0472">Membrane</keyword>
<keyword id="KW-1185">Reference proteome</keyword>
<keyword id="KW-0915">Sodium</keyword>
<keyword id="KW-0739">Sodium transport</keyword>
<keyword id="KW-0769">Symport</keyword>
<keyword id="KW-0812">Transmembrane</keyword>
<keyword id="KW-1133">Transmembrane helix</keyword>
<keyword id="KW-0813">Transport</keyword>
<keyword id="KW-0043">Tumor suppressor</keyword>
<proteinExistence type="evidence at protein level"/>
<name>SC5A8_MOUSE</name>